<proteinExistence type="evidence at protein level"/>
<organism>
    <name type="scientific">Mus musculus</name>
    <name type="common">Mouse</name>
    <dbReference type="NCBI Taxonomy" id="10090"/>
    <lineage>
        <taxon>Eukaryota</taxon>
        <taxon>Metazoa</taxon>
        <taxon>Chordata</taxon>
        <taxon>Craniata</taxon>
        <taxon>Vertebrata</taxon>
        <taxon>Euteleostomi</taxon>
        <taxon>Mammalia</taxon>
        <taxon>Eutheria</taxon>
        <taxon>Euarchontoglires</taxon>
        <taxon>Glires</taxon>
        <taxon>Rodentia</taxon>
        <taxon>Myomorpha</taxon>
        <taxon>Muroidea</taxon>
        <taxon>Muridae</taxon>
        <taxon>Murinae</taxon>
        <taxon>Mus</taxon>
        <taxon>Mus</taxon>
    </lineage>
</organism>
<keyword id="KW-0067">ATP-binding</keyword>
<keyword id="KW-0963">Cytoplasm</keyword>
<keyword id="KW-0315">Glutamine amidotransferase</keyword>
<keyword id="KW-0436">Ligase</keyword>
<keyword id="KW-0460">Magnesium</keyword>
<keyword id="KW-0479">Metal-binding</keyword>
<keyword id="KW-0547">Nucleotide-binding</keyword>
<keyword id="KW-0597">Phosphoprotein</keyword>
<keyword id="KW-0658">Purine biosynthesis</keyword>
<keyword id="KW-1185">Reference proteome</keyword>
<evidence type="ECO:0000250" key="1"/>
<evidence type="ECO:0000250" key="2">
    <source>
        <dbReference type="UniProtKB" id="O15067"/>
    </source>
</evidence>
<evidence type="ECO:0000255" key="3"/>
<evidence type="ECO:0000305" key="4"/>
<name>PUR4_MOUSE</name>
<feature type="chain" id="PRO_0000370848" description="Phosphoribosylformylglycinamidine synthase">
    <location>
        <begin position="1"/>
        <end position="1337"/>
    </location>
</feature>
<feature type="domain" description="Glutamine amidotransferase type-1">
    <location>
        <begin position="1063"/>
        <end position="1301"/>
    </location>
</feature>
<feature type="active site" description="Nucleophile" evidence="1">
    <location>
        <position position="1157"/>
    </location>
</feature>
<feature type="active site" evidence="1">
    <location>
        <position position="1296"/>
    </location>
</feature>
<feature type="active site" evidence="1">
    <location>
        <position position="1298"/>
    </location>
</feature>
<feature type="binding site" evidence="3">
    <location>
        <begin position="322"/>
        <end position="333"/>
    </location>
    <ligand>
        <name>ATP</name>
        <dbReference type="ChEBI" id="CHEBI:30616"/>
    </ligand>
</feature>
<feature type="binding site" evidence="1">
    <location>
        <begin position="402"/>
        <end position="404"/>
    </location>
    <ligand>
        <name>ATP</name>
        <dbReference type="ChEBI" id="CHEBI:30616"/>
    </ligand>
</feature>
<feature type="binding site" evidence="1">
    <location>
        <position position="705"/>
    </location>
    <ligand>
        <name>ATP</name>
        <dbReference type="ChEBI" id="CHEBI:30616"/>
    </ligand>
</feature>
<feature type="binding site" evidence="1">
    <location>
        <position position="706"/>
    </location>
    <ligand>
        <name>Mg(2+)</name>
        <dbReference type="ChEBI" id="CHEBI:18420"/>
    </ligand>
</feature>
<feature type="binding site" evidence="1">
    <location>
        <position position="745"/>
    </location>
    <ligand>
        <name>Mg(2+)</name>
        <dbReference type="ChEBI" id="CHEBI:18420"/>
    </ligand>
</feature>
<feature type="binding site" evidence="1">
    <location>
        <position position="749"/>
    </location>
    <ligand>
        <name>Mg(2+)</name>
        <dbReference type="ChEBI" id="CHEBI:18420"/>
    </ligand>
</feature>
<feature type="binding site" evidence="1">
    <location>
        <position position="908"/>
    </location>
    <ligand>
        <name>Mg(2+)</name>
        <dbReference type="ChEBI" id="CHEBI:18420"/>
    </ligand>
</feature>
<feature type="binding site" evidence="1">
    <location>
        <position position="910"/>
    </location>
    <ligand>
        <name>ATP</name>
        <dbReference type="ChEBI" id="CHEBI:30616"/>
    </ligand>
</feature>
<feature type="modified residue" description="Phosphoserine" evidence="2">
    <location>
        <position position="215"/>
    </location>
</feature>
<feature type="modified residue" description="Phosphothreonine" evidence="2">
    <location>
        <position position="619"/>
    </location>
</feature>
<feature type="modified residue" description="Phosphothreonine" evidence="2">
    <location>
        <position position="622"/>
    </location>
</feature>
<feature type="sequence conflict" description="In Ref. 2; AAI14998." evidence="4" ref="2">
    <original>F</original>
    <variation>L</variation>
    <location>
        <position position="306"/>
    </location>
</feature>
<feature type="sequence conflict" description="In Ref. 3; BAD32216." evidence="4" ref="3">
    <original>GDKR</original>
    <variation>WGPQ</variation>
    <location>
        <begin position="594"/>
        <end position="597"/>
    </location>
</feature>
<accession>Q5SUR0</accession>
<accession>A4FUJ6</accession>
<accession>Q6A080</accession>
<dbReference type="EC" id="6.3.5.3"/>
<dbReference type="EMBL" id="AL645902">
    <property type="status" value="NOT_ANNOTATED_CDS"/>
    <property type="molecule type" value="Genomic_DNA"/>
</dbReference>
<dbReference type="EMBL" id="BC114997">
    <property type="protein sequence ID" value="AAI14998.1"/>
    <property type="molecule type" value="mRNA"/>
</dbReference>
<dbReference type="EMBL" id="AK172938">
    <property type="protein sequence ID" value="BAD32216.1"/>
    <property type="molecule type" value="mRNA"/>
</dbReference>
<dbReference type="CCDS" id="CCDS48823.1"/>
<dbReference type="RefSeq" id="NP_001152991.1">
    <property type="nucleotide sequence ID" value="NM_001159519.1"/>
</dbReference>
<dbReference type="SMR" id="Q5SUR0"/>
<dbReference type="BioGRID" id="231910">
    <property type="interactions" value="29"/>
</dbReference>
<dbReference type="FunCoup" id="Q5SUR0">
    <property type="interactions" value="2532"/>
</dbReference>
<dbReference type="STRING" id="10090.ENSMUSP00000021282"/>
<dbReference type="GlyConnect" id="2586">
    <property type="glycosylation" value="2 N-Linked glycans (1 site)"/>
</dbReference>
<dbReference type="GlyCosmos" id="Q5SUR0">
    <property type="glycosylation" value="1 site, 2 glycans"/>
</dbReference>
<dbReference type="GlyGen" id="Q5SUR0">
    <property type="glycosylation" value="4 sites, 4 N-linked glycans (3 sites), 1 O-linked glycan (1 site)"/>
</dbReference>
<dbReference type="iPTMnet" id="Q5SUR0"/>
<dbReference type="PhosphoSitePlus" id="Q5SUR0"/>
<dbReference type="SwissPalm" id="Q5SUR0"/>
<dbReference type="jPOST" id="Q5SUR0"/>
<dbReference type="PaxDb" id="10090-ENSMUSP00000021282"/>
<dbReference type="PeptideAtlas" id="Q5SUR0"/>
<dbReference type="ProteomicsDB" id="301981"/>
<dbReference type="Pumba" id="Q5SUR0"/>
<dbReference type="Antibodypedia" id="12486">
    <property type="antibodies" value="136 antibodies from 26 providers"/>
</dbReference>
<dbReference type="Ensembl" id="ENSMUST00000021282.12">
    <property type="protein sequence ID" value="ENSMUSP00000021282.6"/>
    <property type="gene ID" value="ENSMUSG00000020899.17"/>
</dbReference>
<dbReference type="GeneID" id="237823"/>
<dbReference type="KEGG" id="mmu:237823"/>
<dbReference type="UCSC" id="uc007jot.2">
    <property type="organism name" value="mouse"/>
</dbReference>
<dbReference type="AGR" id="MGI:2684864"/>
<dbReference type="CTD" id="5198"/>
<dbReference type="MGI" id="MGI:2684864">
    <property type="gene designation" value="Pfas"/>
</dbReference>
<dbReference type="VEuPathDB" id="HostDB:ENSMUSG00000020899"/>
<dbReference type="eggNOG" id="KOG1907">
    <property type="taxonomic scope" value="Eukaryota"/>
</dbReference>
<dbReference type="GeneTree" id="ENSGT00390000007600"/>
<dbReference type="HOGENOM" id="CLU_001031_0_0_1"/>
<dbReference type="InParanoid" id="Q5SUR0"/>
<dbReference type="OMA" id="LSANWMW"/>
<dbReference type="OrthoDB" id="6666987at2759"/>
<dbReference type="PhylomeDB" id="Q5SUR0"/>
<dbReference type="TreeFam" id="TF106371"/>
<dbReference type="Reactome" id="R-MMU-73817">
    <property type="pathway name" value="Purine ribonucleoside monophosphate biosynthesis"/>
</dbReference>
<dbReference type="UniPathway" id="UPA00074">
    <property type="reaction ID" value="UER00128"/>
</dbReference>
<dbReference type="BioGRID-ORCS" id="237823">
    <property type="hits" value="29 hits in 77 CRISPR screens"/>
</dbReference>
<dbReference type="ChiTaRS" id="Pfas">
    <property type="organism name" value="mouse"/>
</dbReference>
<dbReference type="PRO" id="PR:Q5SUR0"/>
<dbReference type="Proteomes" id="UP000000589">
    <property type="component" value="Chromosome 11"/>
</dbReference>
<dbReference type="RNAct" id="Q5SUR0">
    <property type="molecule type" value="protein"/>
</dbReference>
<dbReference type="Bgee" id="ENSMUSG00000020899">
    <property type="expression patterns" value="Expressed in epiblast (generic) and 236 other cell types or tissues"/>
</dbReference>
<dbReference type="ExpressionAtlas" id="Q5SUR0">
    <property type="expression patterns" value="baseline and differential"/>
</dbReference>
<dbReference type="GO" id="GO:0005737">
    <property type="term" value="C:cytoplasm"/>
    <property type="evidence" value="ECO:0007669"/>
    <property type="project" value="UniProtKB-SubCell"/>
</dbReference>
<dbReference type="GO" id="GO:0005524">
    <property type="term" value="F:ATP binding"/>
    <property type="evidence" value="ECO:0007669"/>
    <property type="project" value="UniProtKB-KW"/>
</dbReference>
<dbReference type="GO" id="GO:0046872">
    <property type="term" value="F:metal ion binding"/>
    <property type="evidence" value="ECO:0007669"/>
    <property type="project" value="UniProtKB-KW"/>
</dbReference>
<dbReference type="GO" id="GO:0004642">
    <property type="term" value="F:phosphoribosylformylglycinamidine synthase activity"/>
    <property type="evidence" value="ECO:0000266"/>
    <property type="project" value="MGI"/>
</dbReference>
<dbReference type="GO" id="GO:0044208">
    <property type="term" value="P:'de novo' AMP biosynthetic process"/>
    <property type="evidence" value="ECO:0000266"/>
    <property type="project" value="MGI"/>
</dbReference>
<dbReference type="GO" id="GO:0006189">
    <property type="term" value="P:'de novo' IMP biosynthetic process"/>
    <property type="evidence" value="ECO:0000266"/>
    <property type="project" value="MGI"/>
</dbReference>
<dbReference type="GO" id="GO:0097294">
    <property type="term" value="P:'de novo' XMP biosynthetic process"/>
    <property type="evidence" value="ECO:0000266"/>
    <property type="project" value="MGI"/>
</dbReference>
<dbReference type="GO" id="GO:0097065">
    <property type="term" value="P:anterior head development"/>
    <property type="evidence" value="ECO:0000315"/>
    <property type="project" value="MGI"/>
</dbReference>
<dbReference type="GO" id="GO:0006541">
    <property type="term" value="P:glutamine metabolic process"/>
    <property type="evidence" value="ECO:0007669"/>
    <property type="project" value="Ensembl"/>
</dbReference>
<dbReference type="GO" id="GO:0006177">
    <property type="term" value="P:GMP biosynthetic process"/>
    <property type="evidence" value="ECO:0000266"/>
    <property type="project" value="MGI"/>
</dbReference>
<dbReference type="GO" id="GO:0009410">
    <property type="term" value="P:response to xenobiotic stimulus"/>
    <property type="evidence" value="ECO:0007669"/>
    <property type="project" value="Ensembl"/>
</dbReference>
<dbReference type="CDD" id="cd01740">
    <property type="entry name" value="GATase1_FGAR_AT"/>
    <property type="match status" value="1"/>
</dbReference>
<dbReference type="CDD" id="cd02203">
    <property type="entry name" value="PurL_repeat1"/>
    <property type="match status" value="1"/>
</dbReference>
<dbReference type="CDD" id="cd02204">
    <property type="entry name" value="PurL_repeat2"/>
    <property type="match status" value="1"/>
</dbReference>
<dbReference type="FunFam" id="3.30.1330.10:FF:000010">
    <property type="entry name" value="Phosphoribosylformylglycinamidine synthase"/>
    <property type="match status" value="1"/>
</dbReference>
<dbReference type="FunFam" id="3.90.650.10:FF:000008">
    <property type="entry name" value="Phosphoribosylformylglycinamidine synthase"/>
    <property type="match status" value="1"/>
</dbReference>
<dbReference type="FunFam" id="3.90.650.10:FF:000014">
    <property type="entry name" value="Phosphoribosylformylglycinamidine synthase"/>
    <property type="match status" value="1"/>
</dbReference>
<dbReference type="FunFam" id="3.30.1330.10:FF:000007">
    <property type="entry name" value="Phosphoribosylformylglycinamidine synthase, putative"/>
    <property type="match status" value="1"/>
</dbReference>
<dbReference type="FunFam" id="3.40.50.880:FF:000014">
    <property type="entry name" value="Phosphoribosylformylglycinamidine synthase, putative"/>
    <property type="match status" value="1"/>
</dbReference>
<dbReference type="FunFam" id="1.10.8.750:FF:000001">
    <property type="entry name" value="Putative phosphoribosylformylglycinamidine synthase"/>
    <property type="match status" value="1"/>
</dbReference>
<dbReference type="Gene3D" id="3.40.50.880">
    <property type="match status" value="1"/>
</dbReference>
<dbReference type="Gene3D" id="1.10.8.750">
    <property type="entry name" value="Phosphoribosylformylglycinamidine synthase, linker domain"/>
    <property type="match status" value="1"/>
</dbReference>
<dbReference type="Gene3D" id="3.90.650.10">
    <property type="entry name" value="PurM-like C-terminal domain"/>
    <property type="match status" value="2"/>
</dbReference>
<dbReference type="Gene3D" id="3.30.1330.10">
    <property type="entry name" value="PurM-like, N-terminal domain"/>
    <property type="match status" value="2"/>
</dbReference>
<dbReference type="HAMAP" id="MF_00419">
    <property type="entry name" value="PurL_1"/>
    <property type="match status" value="1"/>
</dbReference>
<dbReference type="InterPro" id="IPR029062">
    <property type="entry name" value="Class_I_gatase-like"/>
</dbReference>
<dbReference type="InterPro" id="IPR040707">
    <property type="entry name" value="FGAR-AT_N"/>
</dbReference>
<dbReference type="InterPro" id="IPR055181">
    <property type="entry name" value="FGAR-AT_PurM_N-like"/>
</dbReference>
<dbReference type="InterPro" id="IPR010073">
    <property type="entry name" value="PurL_large"/>
</dbReference>
<dbReference type="InterPro" id="IPR041609">
    <property type="entry name" value="PurL_linker"/>
</dbReference>
<dbReference type="InterPro" id="IPR010918">
    <property type="entry name" value="PurM-like_C_dom"/>
</dbReference>
<dbReference type="InterPro" id="IPR036676">
    <property type="entry name" value="PurM-like_C_sf"/>
</dbReference>
<dbReference type="InterPro" id="IPR036921">
    <property type="entry name" value="PurM-like_N_sf"/>
</dbReference>
<dbReference type="InterPro" id="IPR036604">
    <property type="entry name" value="PurS-like_sf"/>
</dbReference>
<dbReference type="NCBIfam" id="TIGR01735">
    <property type="entry name" value="FGAM_synt"/>
    <property type="match status" value="1"/>
</dbReference>
<dbReference type="NCBIfam" id="NF003672">
    <property type="entry name" value="PRK05297.1"/>
    <property type="match status" value="1"/>
</dbReference>
<dbReference type="PANTHER" id="PTHR10099">
    <property type="entry name" value="PHOSPHORIBOSYLFORMYLGLYCINAMIDINE SYNTHASE"/>
    <property type="match status" value="1"/>
</dbReference>
<dbReference type="PANTHER" id="PTHR10099:SF1">
    <property type="entry name" value="PHOSPHORIBOSYLFORMYLGLYCINAMIDINE SYNTHASE"/>
    <property type="match status" value="1"/>
</dbReference>
<dbReference type="Pfam" id="PF02769">
    <property type="entry name" value="AIRS_C"/>
    <property type="match status" value="2"/>
</dbReference>
<dbReference type="Pfam" id="PF18072">
    <property type="entry name" value="FGAR-AT_linker"/>
    <property type="match status" value="1"/>
</dbReference>
<dbReference type="Pfam" id="PF18076">
    <property type="entry name" value="FGAR-AT_N"/>
    <property type="match status" value="1"/>
</dbReference>
<dbReference type="Pfam" id="PF22689">
    <property type="entry name" value="FGAR-AT_PurM_N-like"/>
    <property type="match status" value="1"/>
</dbReference>
<dbReference type="Pfam" id="PF13507">
    <property type="entry name" value="GATase_5"/>
    <property type="match status" value="1"/>
</dbReference>
<dbReference type="SMART" id="SM01211">
    <property type="entry name" value="GATase_5"/>
    <property type="match status" value="1"/>
</dbReference>
<dbReference type="SUPFAM" id="SSF52317">
    <property type="entry name" value="Class I glutamine amidotransferase-like"/>
    <property type="match status" value="1"/>
</dbReference>
<dbReference type="SUPFAM" id="SSF109736">
    <property type="entry name" value="FGAM synthase PurL, linker domain"/>
    <property type="match status" value="1"/>
</dbReference>
<dbReference type="SUPFAM" id="SSF56042">
    <property type="entry name" value="PurM C-terminal domain-like"/>
    <property type="match status" value="2"/>
</dbReference>
<dbReference type="SUPFAM" id="SSF55326">
    <property type="entry name" value="PurM N-terminal domain-like"/>
    <property type="match status" value="2"/>
</dbReference>
<dbReference type="SUPFAM" id="SSF82697">
    <property type="entry name" value="PurS-like"/>
    <property type="match status" value="1"/>
</dbReference>
<dbReference type="PROSITE" id="PS51273">
    <property type="entry name" value="GATASE_TYPE_1"/>
    <property type="match status" value="1"/>
</dbReference>
<gene>
    <name type="primary">Pfas</name>
    <name type="synonym">Kiaa0361</name>
</gene>
<comment type="function">
    <text evidence="1">Phosphoribosylformylglycinamidine synthase involved in the purines biosynthetic pathway. Catalyzes the ATP-dependent conversion of formylglycinamide ribonucleotide (FGAR) and glutamine to yield formylglycinamidine ribonucleotide (FGAM) and glutamate (By similarity).</text>
</comment>
<comment type="catalytic activity">
    <reaction>
        <text>N(2)-formyl-N(1)-(5-phospho-beta-D-ribosyl)glycinamide + L-glutamine + ATP + H2O = 2-formamido-N(1)-(5-O-phospho-beta-D-ribosyl)acetamidine + L-glutamate + ADP + phosphate + H(+)</text>
        <dbReference type="Rhea" id="RHEA:17129"/>
        <dbReference type="ChEBI" id="CHEBI:15377"/>
        <dbReference type="ChEBI" id="CHEBI:15378"/>
        <dbReference type="ChEBI" id="CHEBI:29985"/>
        <dbReference type="ChEBI" id="CHEBI:30616"/>
        <dbReference type="ChEBI" id="CHEBI:43474"/>
        <dbReference type="ChEBI" id="CHEBI:58359"/>
        <dbReference type="ChEBI" id="CHEBI:147286"/>
        <dbReference type="ChEBI" id="CHEBI:147287"/>
        <dbReference type="ChEBI" id="CHEBI:456216"/>
        <dbReference type="EC" id="6.3.5.3"/>
    </reaction>
</comment>
<comment type="pathway">
    <text>Purine metabolism; IMP biosynthesis via de novo pathway; 5-amino-1-(5-phospho-D-ribosyl)imidazole from N(2)-formyl-N(1)-(5-phospho-D-ribosyl)glycinamide: step 1/2.</text>
</comment>
<comment type="subcellular location">
    <subcellularLocation>
        <location evidence="1">Cytoplasm</location>
    </subcellularLocation>
</comment>
<comment type="similarity">
    <text evidence="4">In the N-terminal section; belongs to the FGAMS family.</text>
</comment>
<sequence>MAPVLHFYVRPSGHEGAASGRVFRRLQEKLPTLQSVETELCYNVHWAAETLPWAEEMKKLMWLFGCPLVRDDVAQEPWLVPGSNDLLLEVGPRLNFSTPASTNIVSVCQAAGLRAVDRVETTRRYRLSFTDHPTAEMEAISLAALHDRMTEQHYPDPIQSFSPQSIPAPLKGSIDILAEGRPALEKANQELGLALDSWDLDFYTKRFQELQRNPSTVEVFDLAQSNSEHSRHWFFKGQLHVDGKKLAHSLFESIMSTQASSNPNNVLKFCDNSSAIQGKKVKFLRPEDSTRPSCFQQQQGLRHVVFTAETHNFPTGVAPFSGATTGTGGRIRDVQCTGRGAHVVAGTAGYCFGNLHIPDYNLPWEDPSFQYPGNFARPLEVAIEASNGASDYGNKFGEPVLAGFARSLGLQLPDGQRREWIKPIMFSGGIGSMEAKHVGKKPPEPGMEVVKVGGPVYRIGVGGGAASSVQVQGDNTSDLDFGAVQRGDPEMEQKMNRVIRACVEAPGGNPICSLHDQGAGGNGNVLKELSDPEGAIIYTSRFQLGDPTLNALEIWGAEYQESNALLLRPSDRDFLSRASARERCPACFVGTITGDKRIVLVDDRECLVGKTGQGDAPLTPPTPVDLDLDWVLGKMPQKEFFLQRKPPVLQPLALPPELSVRQALNRVLRLPAVASKRYLTNKVDRSVGGLVAQQQCVGPLQTPLADVAVVALSHQECIGAATALGEQPVKSLLDPKAAARLAVSEALTNLVFALVTDLRDVKCSGNWMWAAKLPGEGAALADACEAMVAVMAALGVAVDGGKDSLSMAARVGTETVQAPGSLVISAYAVCPDITATVTPDLKHPGGKGHLLYVPLSPGQHRLGGTALAQCFSQLGEHPPDLDLPENLVRAFHITQGLLKECRLCSGHDVSDGGLVTCLLEMAFAGNCGIEVDVPAPGIHALPVLFAEEPGLVLEVQEADVAGVRQRYESAGLRCLELGHTGEAGPQAMARISVNKAVVVEEPVGELRALWEETSFQLDLLQAEPRCVIEEKQGLKERTGPSYYLPPTFPVASVPCKPGGPVPRVAILREEGSNGDREMADAFHLAGFEVWDVTMQDLCSGAIRLDTFRGVAFVGGFSYADVLGSAKGWAAAVTFNPQAREELGRFRRRPDTFSLGVCNGCQLLALLGWVGSDPSEEQAEPGQDSQPTQPGLLLRHNLSGRFESRWATVRVEPGPALMLRGMEGSVLPVWSAHGEGYMAFSSPELQAKIEAKGLVPLHWADDDGNPTEQYPLNPNGSPGGIAGICSQDGRHLALMPHPERAVRLWQWAWRPSPFDVLPTSPWLQLFINARNWTQEDSC</sequence>
<protein>
    <recommendedName>
        <fullName>Phosphoribosylformylglycinamidine synthase</fullName>
        <shortName>FGAM synthase</shortName>
        <shortName>FGAMS</shortName>
        <ecNumber>6.3.5.3</ecNumber>
    </recommendedName>
    <alternativeName>
        <fullName>Formylglycinamide ribonucleotide amidotransferase</fullName>
        <shortName>FGAR amidotransferase</shortName>
        <shortName>FGAR-AT</shortName>
    </alternativeName>
    <alternativeName>
        <fullName>Formylglycinamide ribotide amidotransferase</fullName>
    </alternativeName>
</protein>
<reference key="1">
    <citation type="journal article" date="2009" name="PLoS Biol.">
        <title>Lineage-specific biology revealed by a finished genome assembly of the mouse.</title>
        <authorList>
            <person name="Church D.M."/>
            <person name="Goodstadt L."/>
            <person name="Hillier L.W."/>
            <person name="Zody M.C."/>
            <person name="Goldstein S."/>
            <person name="She X."/>
            <person name="Bult C.J."/>
            <person name="Agarwala R."/>
            <person name="Cherry J.L."/>
            <person name="DiCuccio M."/>
            <person name="Hlavina W."/>
            <person name="Kapustin Y."/>
            <person name="Meric P."/>
            <person name="Maglott D."/>
            <person name="Birtle Z."/>
            <person name="Marques A.C."/>
            <person name="Graves T."/>
            <person name="Zhou S."/>
            <person name="Teague B."/>
            <person name="Potamousis K."/>
            <person name="Churas C."/>
            <person name="Place M."/>
            <person name="Herschleb J."/>
            <person name="Runnheim R."/>
            <person name="Forrest D."/>
            <person name="Amos-Landgraf J."/>
            <person name="Schwartz D.C."/>
            <person name="Cheng Z."/>
            <person name="Lindblad-Toh K."/>
            <person name="Eichler E.E."/>
            <person name="Ponting C.P."/>
        </authorList>
    </citation>
    <scope>NUCLEOTIDE SEQUENCE [LARGE SCALE GENOMIC DNA]</scope>
    <source>
        <strain>C57BL/6J</strain>
    </source>
</reference>
<reference key="2">
    <citation type="journal article" date="2004" name="Genome Res.">
        <title>The status, quality, and expansion of the NIH full-length cDNA project: the Mammalian Gene Collection (MGC).</title>
        <authorList>
            <consortium name="The MGC Project Team"/>
        </authorList>
    </citation>
    <scope>NUCLEOTIDE SEQUENCE [LARGE SCALE MRNA]</scope>
    <source>
        <strain>C57BL/6J</strain>
    </source>
</reference>
<reference key="3">
    <citation type="journal article" date="2004" name="DNA Res.">
        <title>Prediction of the coding sequences of mouse homologues of KIAA gene: IV. The complete nucleotide sequences of 500 mouse KIAA-homologous cDNAs identified by screening of terminal sequences of cDNA clones randomly sampled from size-fractionated libraries.</title>
        <authorList>
            <person name="Okazaki N."/>
            <person name="Kikuno R."/>
            <person name="Ohara R."/>
            <person name="Inamoto S."/>
            <person name="Koseki H."/>
            <person name="Hiraoka S."/>
            <person name="Saga Y."/>
            <person name="Seino S."/>
            <person name="Nishimura M."/>
            <person name="Kaisho T."/>
            <person name="Hoshino K."/>
            <person name="Kitamura H."/>
            <person name="Nagase T."/>
            <person name="Ohara O."/>
            <person name="Koga H."/>
        </authorList>
    </citation>
    <scope>NUCLEOTIDE SEQUENCE [LARGE SCALE MRNA] OF 594-1337</scope>
    <source>
        <tissue>Pancreatic islet</tissue>
    </source>
</reference>
<reference key="4">
    <citation type="journal article" date="2010" name="Cell">
        <title>A tissue-specific atlas of mouse protein phosphorylation and expression.</title>
        <authorList>
            <person name="Huttlin E.L."/>
            <person name="Jedrychowski M.P."/>
            <person name="Elias J.E."/>
            <person name="Goswami T."/>
            <person name="Rad R."/>
            <person name="Beausoleil S.A."/>
            <person name="Villen J."/>
            <person name="Haas W."/>
            <person name="Sowa M.E."/>
            <person name="Gygi S.P."/>
        </authorList>
    </citation>
    <scope>IDENTIFICATION BY MASS SPECTROMETRY [LARGE SCALE ANALYSIS]</scope>
    <source>
        <tissue>Brain</tissue>
        <tissue>Brown adipose tissue</tissue>
        <tissue>Heart</tissue>
        <tissue>Kidney</tissue>
        <tissue>Liver</tissue>
        <tissue>Lung</tissue>
        <tissue>Pancreas</tissue>
        <tissue>Spleen</tissue>
        <tissue>Testis</tissue>
    </source>
</reference>